<gene>
    <name evidence="1" type="primary">efp</name>
    <name type="ordered locus">CKL_1216</name>
</gene>
<protein>
    <recommendedName>
        <fullName evidence="1">Elongation factor P</fullName>
        <shortName evidence="1">EF-P</shortName>
    </recommendedName>
</protein>
<sequence>MISAGDLRKGTTFEQDGQVYTVVDFLHVKPGKGAAFVRTKLRNVITGSVTDTTFNPSAKLQEAVIERKEMQYLYSDGELYYFMDQETFEQIPLEYAKVQEAIKFLKENMFAIIKFYKGEAFSVEAPNFVELQVTHTEPGVKGNTATNVLKPATLETGAVVSVPIFVNQGETIRVDTRSGEYMERV</sequence>
<keyword id="KW-0963">Cytoplasm</keyword>
<keyword id="KW-0251">Elongation factor</keyword>
<keyword id="KW-0648">Protein biosynthesis</keyword>
<keyword id="KW-1185">Reference proteome</keyword>
<evidence type="ECO:0000255" key="1">
    <source>
        <dbReference type="HAMAP-Rule" id="MF_00141"/>
    </source>
</evidence>
<comment type="function">
    <text evidence="1">Involved in peptide bond synthesis. Stimulates efficient translation and peptide-bond synthesis on native or reconstituted 70S ribosomes in vitro. Probably functions indirectly by altering the affinity of the ribosome for aminoacyl-tRNA, thus increasing their reactivity as acceptors for peptidyl transferase.</text>
</comment>
<comment type="pathway">
    <text evidence="1">Protein biosynthesis; polypeptide chain elongation.</text>
</comment>
<comment type="subcellular location">
    <subcellularLocation>
        <location evidence="1">Cytoplasm</location>
    </subcellularLocation>
</comment>
<comment type="similarity">
    <text evidence="1">Belongs to the elongation factor P family.</text>
</comment>
<dbReference type="EMBL" id="CP000673">
    <property type="protein sequence ID" value="EDK33258.1"/>
    <property type="molecule type" value="Genomic_DNA"/>
</dbReference>
<dbReference type="RefSeq" id="WP_012101597.1">
    <property type="nucleotide sequence ID" value="NC_009706.1"/>
</dbReference>
<dbReference type="SMR" id="A5N7H7"/>
<dbReference type="STRING" id="431943.CKL_1216"/>
<dbReference type="KEGG" id="ckl:CKL_1216"/>
<dbReference type="eggNOG" id="COG0231">
    <property type="taxonomic scope" value="Bacteria"/>
</dbReference>
<dbReference type="HOGENOM" id="CLU_074944_0_1_9"/>
<dbReference type="UniPathway" id="UPA00345"/>
<dbReference type="Proteomes" id="UP000002411">
    <property type="component" value="Chromosome"/>
</dbReference>
<dbReference type="GO" id="GO:0005737">
    <property type="term" value="C:cytoplasm"/>
    <property type="evidence" value="ECO:0007669"/>
    <property type="project" value="UniProtKB-SubCell"/>
</dbReference>
<dbReference type="GO" id="GO:0003746">
    <property type="term" value="F:translation elongation factor activity"/>
    <property type="evidence" value="ECO:0007669"/>
    <property type="project" value="UniProtKB-UniRule"/>
</dbReference>
<dbReference type="GO" id="GO:0043043">
    <property type="term" value="P:peptide biosynthetic process"/>
    <property type="evidence" value="ECO:0007669"/>
    <property type="project" value="InterPro"/>
</dbReference>
<dbReference type="CDD" id="cd04470">
    <property type="entry name" value="S1_EF-P_repeat_1"/>
    <property type="match status" value="1"/>
</dbReference>
<dbReference type="CDD" id="cd05794">
    <property type="entry name" value="S1_EF-P_repeat_2"/>
    <property type="match status" value="1"/>
</dbReference>
<dbReference type="FunFam" id="2.30.30.30:FF:000003">
    <property type="entry name" value="Elongation factor P"/>
    <property type="match status" value="1"/>
</dbReference>
<dbReference type="FunFam" id="2.40.50.140:FF:000004">
    <property type="entry name" value="Elongation factor P"/>
    <property type="match status" value="1"/>
</dbReference>
<dbReference type="FunFam" id="2.40.50.140:FF:000009">
    <property type="entry name" value="Elongation factor P"/>
    <property type="match status" value="1"/>
</dbReference>
<dbReference type="Gene3D" id="2.30.30.30">
    <property type="match status" value="1"/>
</dbReference>
<dbReference type="Gene3D" id="2.40.50.140">
    <property type="entry name" value="Nucleic acid-binding proteins"/>
    <property type="match status" value="2"/>
</dbReference>
<dbReference type="HAMAP" id="MF_00141">
    <property type="entry name" value="EF_P"/>
    <property type="match status" value="1"/>
</dbReference>
<dbReference type="InterPro" id="IPR015365">
    <property type="entry name" value="Elong-fact-P_C"/>
</dbReference>
<dbReference type="InterPro" id="IPR012340">
    <property type="entry name" value="NA-bd_OB-fold"/>
</dbReference>
<dbReference type="InterPro" id="IPR014722">
    <property type="entry name" value="Rib_uL2_dom2"/>
</dbReference>
<dbReference type="InterPro" id="IPR020599">
    <property type="entry name" value="Transl_elong_fac_P/YeiP"/>
</dbReference>
<dbReference type="InterPro" id="IPR013185">
    <property type="entry name" value="Transl_elong_KOW-like"/>
</dbReference>
<dbReference type="InterPro" id="IPR001059">
    <property type="entry name" value="Transl_elong_P/YeiP_cen"/>
</dbReference>
<dbReference type="InterPro" id="IPR013852">
    <property type="entry name" value="Transl_elong_P/YeiP_CS"/>
</dbReference>
<dbReference type="InterPro" id="IPR011768">
    <property type="entry name" value="Transl_elongation_fac_P"/>
</dbReference>
<dbReference type="InterPro" id="IPR008991">
    <property type="entry name" value="Translation_prot_SH3-like_sf"/>
</dbReference>
<dbReference type="NCBIfam" id="TIGR00038">
    <property type="entry name" value="efp"/>
    <property type="match status" value="1"/>
</dbReference>
<dbReference type="NCBIfam" id="NF001810">
    <property type="entry name" value="PRK00529.1"/>
    <property type="match status" value="1"/>
</dbReference>
<dbReference type="PANTHER" id="PTHR30053">
    <property type="entry name" value="ELONGATION FACTOR P"/>
    <property type="match status" value="1"/>
</dbReference>
<dbReference type="PANTHER" id="PTHR30053:SF12">
    <property type="entry name" value="ELONGATION FACTOR P (EF-P) FAMILY PROTEIN"/>
    <property type="match status" value="1"/>
</dbReference>
<dbReference type="Pfam" id="PF01132">
    <property type="entry name" value="EFP"/>
    <property type="match status" value="1"/>
</dbReference>
<dbReference type="Pfam" id="PF08207">
    <property type="entry name" value="EFP_N"/>
    <property type="match status" value="1"/>
</dbReference>
<dbReference type="Pfam" id="PF09285">
    <property type="entry name" value="Elong-fact-P_C"/>
    <property type="match status" value="1"/>
</dbReference>
<dbReference type="PIRSF" id="PIRSF005901">
    <property type="entry name" value="EF-P"/>
    <property type="match status" value="1"/>
</dbReference>
<dbReference type="SMART" id="SM01185">
    <property type="entry name" value="EFP"/>
    <property type="match status" value="1"/>
</dbReference>
<dbReference type="SMART" id="SM00841">
    <property type="entry name" value="Elong-fact-P_C"/>
    <property type="match status" value="1"/>
</dbReference>
<dbReference type="SUPFAM" id="SSF50249">
    <property type="entry name" value="Nucleic acid-binding proteins"/>
    <property type="match status" value="2"/>
</dbReference>
<dbReference type="SUPFAM" id="SSF50104">
    <property type="entry name" value="Translation proteins SH3-like domain"/>
    <property type="match status" value="1"/>
</dbReference>
<dbReference type="PROSITE" id="PS01275">
    <property type="entry name" value="EFP"/>
    <property type="match status" value="1"/>
</dbReference>
<organism>
    <name type="scientific">Clostridium kluyveri (strain ATCC 8527 / DSM 555 / NBRC 12016 / NCIMB 10680 / K1)</name>
    <dbReference type="NCBI Taxonomy" id="431943"/>
    <lineage>
        <taxon>Bacteria</taxon>
        <taxon>Bacillati</taxon>
        <taxon>Bacillota</taxon>
        <taxon>Clostridia</taxon>
        <taxon>Eubacteriales</taxon>
        <taxon>Clostridiaceae</taxon>
        <taxon>Clostridium</taxon>
    </lineage>
</organism>
<accession>A5N7H7</accession>
<name>EFP_CLOK5</name>
<proteinExistence type="inferred from homology"/>
<feature type="chain" id="PRO_1000076509" description="Elongation factor P">
    <location>
        <begin position="1"/>
        <end position="185"/>
    </location>
</feature>
<reference key="1">
    <citation type="journal article" date="2008" name="Proc. Natl. Acad. Sci. U.S.A.">
        <title>The genome of Clostridium kluyveri, a strict anaerobe with unique metabolic features.</title>
        <authorList>
            <person name="Seedorf H."/>
            <person name="Fricke W.F."/>
            <person name="Veith B."/>
            <person name="Brueggemann H."/>
            <person name="Liesegang H."/>
            <person name="Strittmatter A."/>
            <person name="Miethke M."/>
            <person name="Buckel W."/>
            <person name="Hinderberger J."/>
            <person name="Li F."/>
            <person name="Hagemeier C."/>
            <person name="Thauer R.K."/>
            <person name="Gottschalk G."/>
        </authorList>
    </citation>
    <scope>NUCLEOTIDE SEQUENCE [LARGE SCALE GENOMIC DNA]</scope>
    <source>
        <strain>ATCC 8527 / DSM 555 / NBRC 12016 / NCIMB 10680 / K1</strain>
    </source>
</reference>